<organism>
    <name type="scientific">Escherichia coli (strain K12 / DH10B)</name>
    <dbReference type="NCBI Taxonomy" id="316385"/>
    <lineage>
        <taxon>Bacteria</taxon>
        <taxon>Pseudomonadati</taxon>
        <taxon>Pseudomonadota</taxon>
        <taxon>Gammaproteobacteria</taxon>
        <taxon>Enterobacterales</taxon>
        <taxon>Enterobacteriaceae</taxon>
        <taxon>Escherichia</taxon>
    </lineage>
</organism>
<name>SUFE_ECODH</name>
<sequence length="138" mass="15800">MALLPDKEKLLRNFLRCANWEEKYLYIIELGQRLPELRDEDRSPQNSIQGCQSQVWIVMRQNAQGIIELQGDSDAAIVKGLIAVVFILYDQMTPQDIVNFDVRPWFEKMALTQHLTPSRSQGLEAMIRAIRAKAAALS</sequence>
<evidence type="ECO:0000255" key="1">
    <source>
        <dbReference type="HAMAP-Rule" id="MF_01832"/>
    </source>
</evidence>
<proteinExistence type="inferred from homology"/>
<dbReference type="EMBL" id="CP000948">
    <property type="protein sequence ID" value="ACB02881.1"/>
    <property type="molecule type" value="Genomic_DNA"/>
</dbReference>
<dbReference type="RefSeq" id="WP_001196530.1">
    <property type="nucleotide sequence ID" value="NC_010473.1"/>
</dbReference>
<dbReference type="SMR" id="B1XFY7"/>
<dbReference type="KEGG" id="ecd:ECDH10B_1813"/>
<dbReference type="HOGENOM" id="CLU_124502_1_1_6"/>
<dbReference type="UniPathway" id="UPA00266"/>
<dbReference type="GO" id="GO:0005737">
    <property type="term" value="C:cytoplasm"/>
    <property type="evidence" value="ECO:0007669"/>
    <property type="project" value="UniProtKB-SubCell"/>
</dbReference>
<dbReference type="GO" id="GO:0016226">
    <property type="term" value="P:iron-sulfur cluster assembly"/>
    <property type="evidence" value="ECO:0007669"/>
    <property type="project" value="InterPro"/>
</dbReference>
<dbReference type="GO" id="GO:0006790">
    <property type="term" value="P:sulfur compound metabolic process"/>
    <property type="evidence" value="ECO:0007669"/>
    <property type="project" value="InterPro"/>
</dbReference>
<dbReference type="FunFam" id="3.90.1010.10:FF:000004">
    <property type="entry name" value="Cysteine desulfuration protein SufE"/>
    <property type="match status" value="1"/>
</dbReference>
<dbReference type="Gene3D" id="3.90.1010.10">
    <property type="match status" value="1"/>
</dbReference>
<dbReference type="HAMAP" id="MF_01832">
    <property type="entry name" value="SufE"/>
    <property type="match status" value="1"/>
</dbReference>
<dbReference type="InterPro" id="IPR023939">
    <property type="entry name" value="Cysteine_desulfuration_SufE"/>
</dbReference>
<dbReference type="InterPro" id="IPR003808">
    <property type="entry name" value="Fe-S_metab-assoc_dom"/>
</dbReference>
<dbReference type="NCBIfam" id="NF006792">
    <property type="entry name" value="PRK09296.1"/>
    <property type="match status" value="1"/>
</dbReference>
<dbReference type="PANTHER" id="PTHR43597:SF3">
    <property type="entry name" value="CYSTEINE DESULFURATION PROTEIN SUFE"/>
    <property type="match status" value="1"/>
</dbReference>
<dbReference type="PANTHER" id="PTHR43597">
    <property type="entry name" value="SULFUR ACCEPTOR PROTEIN CSDE"/>
    <property type="match status" value="1"/>
</dbReference>
<dbReference type="Pfam" id="PF02657">
    <property type="entry name" value="SufE"/>
    <property type="match status" value="1"/>
</dbReference>
<dbReference type="SUPFAM" id="SSF82649">
    <property type="entry name" value="SufE/NifU"/>
    <property type="match status" value="1"/>
</dbReference>
<protein>
    <recommendedName>
        <fullName evidence="1">Cysteine desulfuration protein SufE</fullName>
    </recommendedName>
</protein>
<gene>
    <name evidence="1" type="primary">sufE</name>
    <name type="ordered locus">ECDH10B_1813</name>
</gene>
<comment type="function">
    <text evidence="1">Participates in cysteine desulfuration mediated by SufS. Cysteine desulfuration mobilizes sulfur from L-cysteine to yield L-alanine and constitutes an essential step in sulfur metabolism for biosynthesis of a variety of sulfur-containing biomolecules. Functions as a sulfur acceptor for SufS, by mediating the direct transfer of the sulfur atom from the S-sulfanylcysteine of SufS, an intermediate product of cysteine desulfuration process.</text>
</comment>
<comment type="pathway">
    <text evidence="1">Cofactor biosynthesis; iron-sulfur cluster biosynthesis.</text>
</comment>
<comment type="subunit">
    <text evidence="1">Homodimer. Interacts with SufS.</text>
</comment>
<comment type="subcellular location">
    <subcellularLocation>
        <location evidence="1">Cytoplasm</location>
    </subcellularLocation>
</comment>
<comment type="similarity">
    <text evidence="1">Belongs to the SufE family.</text>
</comment>
<keyword id="KW-0963">Cytoplasm</keyword>
<feature type="chain" id="PRO_1000188324" description="Cysteine desulfuration protein SufE">
    <location>
        <begin position="1"/>
        <end position="138"/>
    </location>
</feature>
<feature type="active site" description="Cysteine persulfide intermediate" evidence="1">
    <location>
        <position position="51"/>
    </location>
</feature>
<accession>B1XFY7</accession>
<reference key="1">
    <citation type="journal article" date="2008" name="J. Bacteriol.">
        <title>The complete genome sequence of Escherichia coli DH10B: insights into the biology of a laboratory workhorse.</title>
        <authorList>
            <person name="Durfee T."/>
            <person name="Nelson R."/>
            <person name="Baldwin S."/>
            <person name="Plunkett G. III"/>
            <person name="Burland V."/>
            <person name="Mau B."/>
            <person name="Petrosino J.F."/>
            <person name="Qin X."/>
            <person name="Muzny D.M."/>
            <person name="Ayele M."/>
            <person name="Gibbs R.A."/>
            <person name="Csorgo B."/>
            <person name="Posfai G."/>
            <person name="Weinstock G.M."/>
            <person name="Blattner F.R."/>
        </authorList>
    </citation>
    <scope>NUCLEOTIDE SEQUENCE [LARGE SCALE GENOMIC DNA]</scope>
    <source>
        <strain>K12 / DH10B</strain>
    </source>
</reference>